<accession>Q2MIE6</accession>
<name>RK2_SOLBU</name>
<proteinExistence type="inferred from homology"/>
<organism>
    <name type="scientific">Solanum bulbocastanum</name>
    <name type="common">Wild potato</name>
    <dbReference type="NCBI Taxonomy" id="147425"/>
    <lineage>
        <taxon>Eukaryota</taxon>
        <taxon>Viridiplantae</taxon>
        <taxon>Streptophyta</taxon>
        <taxon>Embryophyta</taxon>
        <taxon>Tracheophyta</taxon>
        <taxon>Spermatophyta</taxon>
        <taxon>Magnoliopsida</taxon>
        <taxon>eudicotyledons</taxon>
        <taxon>Gunneridae</taxon>
        <taxon>Pentapetalae</taxon>
        <taxon>asterids</taxon>
        <taxon>lamiids</taxon>
        <taxon>Solanales</taxon>
        <taxon>Solanaceae</taxon>
        <taxon>Solanoideae</taxon>
        <taxon>Solaneae</taxon>
        <taxon>Solanum</taxon>
    </lineage>
</organism>
<dbReference type="EMBL" id="DQ347958">
    <property type="protein sequence ID" value="ABC56254.1"/>
    <property type="molecule type" value="Genomic_DNA"/>
</dbReference>
<dbReference type="EMBL" id="DQ347958">
    <property type="protein sequence ID" value="ABC56279.1"/>
    <property type="molecule type" value="Genomic_DNA"/>
</dbReference>
<dbReference type="SMR" id="Q2MIE6"/>
<dbReference type="GO" id="GO:0009507">
    <property type="term" value="C:chloroplast"/>
    <property type="evidence" value="ECO:0007669"/>
    <property type="project" value="UniProtKB-SubCell"/>
</dbReference>
<dbReference type="GO" id="GO:0005762">
    <property type="term" value="C:mitochondrial large ribosomal subunit"/>
    <property type="evidence" value="ECO:0007669"/>
    <property type="project" value="TreeGrafter"/>
</dbReference>
<dbReference type="GO" id="GO:0019843">
    <property type="term" value="F:rRNA binding"/>
    <property type="evidence" value="ECO:0007669"/>
    <property type="project" value="UniProtKB-UniRule"/>
</dbReference>
<dbReference type="GO" id="GO:0003735">
    <property type="term" value="F:structural constituent of ribosome"/>
    <property type="evidence" value="ECO:0007669"/>
    <property type="project" value="InterPro"/>
</dbReference>
<dbReference type="GO" id="GO:0016740">
    <property type="term" value="F:transferase activity"/>
    <property type="evidence" value="ECO:0007669"/>
    <property type="project" value="InterPro"/>
</dbReference>
<dbReference type="GO" id="GO:0032543">
    <property type="term" value="P:mitochondrial translation"/>
    <property type="evidence" value="ECO:0007669"/>
    <property type="project" value="TreeGrafter"/>
</dbReference>
<dbReference type="FunFam" id="4.10.950.10:FF:000001">
    <property type="entry name" value="50S ribosomal protein L2"/>
    <property type="match status" value="1"/>
</dbReference>
<dbReference type="FunFam" id="2.30.30.30:FF:000008">
    <property type="entry name" value="50S ribosomal protein L2, chloroplastic"/>
    <property type="match status" value="1"/>
</dbReference>
<dbReference type="FunFam" id="2.40.50.140:FF:000029">
    <property type="entry name" value="50S ribosomal protein L2, chloroplastic"/>
    <property type="match status" value="1"/>
</dbReference>
<dbReference type="Gene3D" id="2.30.30.30">
    <property type="match status" value="1"/>
</dbReference>
<dbReference type="Gene3D" id="2.40.50.140">
    <property type="entry name" value="Nucleic acid-binding proteins"/>
    <property type="match status" value="1"/>
</dbReference>
<dbReference type="Gene3D" id="4.10.950.10">
    <property type="entry name" value="Ribosomal protein L2, domain 3"/>
    <property type="match status" value="1"/>
</dbReference>
<dbReference type="HAMAP" id="MF_01320_B">
    <property type="entry name" value="Ribosomal_uL2_B"/>
    <property type="match status" value="1"/>
</dbReference>
<dbReference type="InterPro" id="IPR012340">
    <property type="entry name" value="NA-bd_OB-fold"/>
</dbReference>
<dbReference type="InterPro" id="IPR014722">
    <property type="entry name" value="Rib_uL2_dom2"/>
</dbReference>
<dbReference type="InterPro" id="IPR002171">
    <property type="entry name" value="Ribosomal_uL2"/>
</dbReference>
<dbReference type="InterPro" id="IPR005880">
    <property type="entry name" value="Ribosomal_uL2_bac/org-type"/>
</dbReference>
<dbReference type="InterPro" id="IPR022669">
    <property type="entry name" value="Ribosomal_uL2_C"/>
</dbReference>
<dbReference type="InterPro" id="IPR022671">
    <property type="entry name" value="Ribosomal_uL2_CS"/>
</dbReference>
<dbReference type="InterPro" id="IPR014726">
    <property type="entry name" value="Ribosomal_uL2_dom3"/>
</dbReference>
<dbReference type="InterPro" id="IPR022666">
    <property type="entry name" value="Ribosomal_uL2_RNA-bd_dom"/>
</dbReference>
<dbReference type="InterPro" id="IPR008991">
    <property type="entry name" value="Translation_prot_SH3-like_sf"/>
</dbReference>
<dbReference type="NCBIfam" id="TIGR01171">
    <property type="entry name" value="rplB_bact"/>
    <property type="match status" value="1"/>
</dbReference>
<dbReference type="PANTHER" id="PTHR13691:SF5">
    <property type="entry name" value="LARGE RIBOSOMAL SUBUNIT PROTEIN UL2M"/>
    <property type="match status" value="1"/>
</dbReference>
<dbReference type="PANTHER" id="PTHR13691">
    <property type="entry name" value="RIBOSOMAL PROTEIN L2"/>
    <property type="match status" value="1"/>
</dbReference>
<dbReference type="Pfam" id="PF00181">
    <property type="entry name" value="Ribosomal_L2"/>
    <property type="match status" value="1"/>
</dbReference>
<dbReference type="Pfam" id="PF03947">
    <property type="entry name" value="Ribosomal_L2_C"/>
    <property type="match status" value="1"/>
</dbReference>
<dbReference type="PIRSF" id="PIRSF002158">
    <property type="entry name" value="Ribosomal_L2"/>
    <property type="match status" value="1"/>
</dbReference>
<dbReference type="SMART" id="SM01383">
    <property type="entry name" value="Ribosomal_L2"/>
    <property type="match status" value="1"/>
</dbReference>
<dbReference type="SMART" id="SM01382">
    <property type="entry name" value="Ribosomal_L2_C"/>
    <property type="match status" value="1"/>
</dbReference>
<dbReference type="SUPFAM" id="SSF50249">
    <property type="entry name" value="Nucleic acid-binding proteins"/>
    <property type="match status" value="1"/>
</dbReference>
<dbReference type="SUPFAM" id="SSF50104">
    <property type="entry name" value="Translation proteins SH3-like domain"/>
    <property type="match status" value="1"/>
</dbReference>
<dbReference type="PROSITE" id="PS00467">
    <property type="entry name" value="RIBOSOMAL_L2"/>
    <property type="match status" value="1"/>
</dbReference>
<geneLocation type="chloroplast"/>
<comment type="subunit">
    <text evidence="1">Part of the 50S ribosomal subunit.</text>
</comment>
<comment type="subcellular location">
    <subcellularLocation>
        <location>Plastid</location>
        <location>Chloroplast</location>
    </subcellularLocation>
</comment>
<comment type="similarity">
    <text evidence="4">Belongs to the universal ribosomal protein uL2 family.</text>
</comment>
<evidence type="ECO:0000250" key="1"/>
<evidence type="ECO:0000255" key="2">
    <source>
        <dbReference type="HAMAP-Rule" id="MF_01320"/>
    </source>
</evidence>
<evidence type="ECO:0000256" key="3">
    <source>
        <dbReference type="SAM" id="MobiDB-lite"/>
    </source>
</evidence>
<evidence type="ECO:0000305" key="4"/>
<reference key="1">
    <citation type="journal article" date="2006" name="Theor. Appl. Genet.">
        <title>Complete chloroplast genome sequences of Solanum bulbocastanum, Solanum lycopersicum and comparative analyses with other Solanaceae genomes.</title>
        <authorList>
            <person name="Daniell H."/>
            <person name="Lee S.-B."/>
            <person name="Grevich J."/>
            <person name="Saski C."/>
            <person name="Quesada-Vargas T."/>
            <person name="Guda C."/>
            <person name="Tomkins J."/>
            <person name="Jansen R.K."/>
        </authorList>
    </citation>
    <scope>NUCLEOTIDE SEQUENCE [LARGE SCALE GENOMIC DNA]</scope>
    <source>
        <strain>cv. PT29</strain>
    </source>
</reference>
<feature type="chain" id="PRO_0000237285" description="Large ribosomal subunit protein uL2cz/uL2cy">
    <location>
        <begin position="1"/>
        <end position="274"/>
    </location>
</feature>
<feature type="region of interest" description="Disordered" evidence="3">
    <location>
        <begin position="1"/>
        <end position="25"/>
    </location>
</feature>
<feature type="region of interest" description="Disordered" evidence="3">
    <location>
        <begin position="224"/>
        <end position="274"/>
    </location>
</feature>
<feature type="compositionally biased region" description="Polar residues" evidence="3">
    <location>
        <begin position="7"/>
        <end position="25"/>
    </location>
</feature>
<keyword id="KW-0150">Chloroplast</keyword>
<keyword id="KW-0934">Plastid</keyword>
<keyword id="KW-0687">Ribonucleoprotein</keyword>
<keyword id="KW-0689">Ribosomal protein</keyword>
<protein>
    <recommendedName>
        <fullName evidence="2">Large ribosomal subunit protein uL2cz/uL2cy</fullName>
    </recommendedName>
    <alternativeName>
        <fullName evidence="4">50S ribosomal protein L2, chloroplastic</fullName>
    </alternativeName>
</protein>
<gene>
    <name type="primary">rpl2-A</name>
</gene>
<gene>
    <name type="primary">rpl2-B</name>
</gene>
<sequence length="274" mass="30049">MAIHLYKTSTPSTRNGTVDSQVKSNPRNNLIYGQRRCGKGRNARGIITARHRGGGHKRLYRKIDFRRNEKDIYGRIVTIEYDPNRNAYICLIHYGDGEKRYILHPRGAIIGDTIVSGTEVPIKMGNALPLTDMPLGTAIHNIEITLGKGGQLARAAGAVAKLIAKEGKSATLKLPSGEVRLISKNCSATVGQVGNVGVNQKSLGRAGSKRWLGKRPVVRGVVMNPVDHPHGGGEGRAPIGRKKPTTPWGYPALGRRSRKRNKYSDNLILRRRSK</sequence>